<sequence length="535" mass="61260">MELSPRSPPEMLESDCPSPLELKSAPSKKMWIKLRSLLRYMVKQLENGEVNIEELKKNLEYTASLLEAVYIDETRQILDTEDELRELRSDAVPSEVRDWLASTFTQQTRAKGRRAEEKPKFRSIVHAVQAGIFVERMFRRTYTAVGPTYSTAVHNCLKNLDVWCFDVFSLNRAADDHALRTIVFELLTRHSLISRFKIPTVFLMSFLEALETGYGKYKNPYHNQIHAADVTQTVHCFLLRTGMVHCLSEIEVLAIIFAAAIHDYEHTGTTNSFHIQTKSECAILYNDRSVLENHHISSVFRMMQDDEMNIFINLTKDEFVELRALVIEMVLATDMSCHFQQVKTMKTALQQLERIDKSKALSLLLHAADISHPTKQWSVHSRWTKALMEEFFRQGDKEAELGLPFSPLCDRTSTLVAQSQIGFIDFIVEPTFSVLTDVAEKSVQPLTDDDSKSKSQPSFQWRQPSLDVDVGDPNPDVVSFRSTWTKYIQENKQKWKERAASGITNQMSIDELSPCEEEAPSSPAEDEHNQNGNLD</sequence>
<organism>
    <name type="scientific">Rattus norvegicus</name>
    <name type="common">Rat</name>
    <dbReference type="NCBI Taxonomy" id="10116"/>
    <lineage>
        <taxon>Eukaryota</taxon>
        <taxon>Metazoa</taxon>
        <taxon>Chordata</taxon>
        <taxon>Craniata</taxon>
        <taxon>Vertebrata</taxon>
        <taxon>Euteleostomi</taxon>
        <taxon>Mammalia</taxon>
        <taxon>Eutheria</taxon>
        <taxon>Euarchontoglires</taxon>
        <taxon>Glires</taxon>
        <taxon>Rodentia</taxon>
        <taxon>Myomorpha</taxon>
        <taxon>Muroidea</taxon>
        <taxon>Muridae</taxon>
        <taxon>Murinae</taxon>
        <taxon>Rattus</taxon>
    </lineage>
</organism>
<reference key="1">
    <citation type="journal article" date="1992" name="J. Biol. Chem.">
        <title>A polymerase chain reaction strategy to identify and clone cyclic nucleotide phosphodiesterase cDNAs. Molecular cloning of the cDNA encoding the 63-kDa calmodulin-dependent phosphodiesterase.</title>
        <authorList>
            <person name="Repaske D.R."/>
            <person name="Swinnen J.V."/>
            <person name="Jin S.-L.C."/>
            <person name="van Wyk J.J."/>
            <person name="Conti M."/>
        </authorList>
    </citation>
    <scope>NUCLEOTIDE SEQUENCE [MRNA]</scope>
    <scope>FUNCTION</scope>
    <scope>CATALYTIC ACTIVITY</scope>
    <scope>ACTIVITY REGULATION</scope>
    <scope>TISSUE SPECIFICITY</scope>
</reference>
<reference key="2">
    <citation type="submission" date="2000-12" db="EMBL/GenBank/DDBJ databases">
        <title>Phosphodiesterase 1B (PDE1B) in rat brain.</title>
        <authorList>
            <person name="Prime G.R."/>
            <person name="Sutor B."/>
        </authorList>
    </citation>
    <scope>NUCLEOTIDE SEQUENCE [MRNA]</scope>
    <source>
        <strain>Wistar</strain>
    </source>
</reference>
<reference key="3">
    <citation type="journal article" date="2012" name="Nat. Commun.">
        <title>Quantitative maps of protein phosphorylation sites across 14 different rat organs and tissues.</title>
        <authorList>
            <person name="Lundby A."/>
            <person name="Secher A."/>
            <person name="Lage K."/>
            <person name="Nordsborg N.B."/>
            <person name="Dmytriyev A."/>
            <person name="Lundby C."/>
            <person name="Olsen J.V."/>
        </authorList>
    </citation>
    <scope>PHOSPHORYLATION [LARGE SCALE ANALYSIS] AT SER-465</scope>
    <scope>IDENTIFICATION BY MASS SPECTROMETRY [LARGE SCALE ANALYSIS]</scope>
</reference>
<protein>
    <recommendedName>
        <fullName evidence="10">Dual specificity calcium/calmodulin-dependent 3',5'-cyclic nucleotide phosphodiesterase 1B</fullName>
        <shortName>Cam-PDE 1B</shortName>
        <ecNumber evidence="7">3.1.4.17</ecNumber>
    </recommendedName>
    <alternativeName>
        <fullName evidence="8">63 kDa Cam-PDE</fullName>
    </alternativeName>
</protein>
<name>PDE1B_RAT</name>
<dbReference type="EC" id="3.1.4.17" evidence="7"/>
<dbReference type="EMBL" id="M94537">
    <property type="protein sequence ID" value="AAA16530.1"/>
    <property type="molecule type" value="mRNA"/>
</dbReference>
<dbReference type="EMBL" id="AF327906">
    <property type="protein sequence ID" value="AAK15740.1"/>
    <property type="molecule type" value="mRNA"/>
</dbReference>
<dbReference type="PIR" id="A44161">
    <property type="entry name" value="A44161"/>
</dbReference>
<dbReference type="RefSeq" id="NP_073201.1">
    <property type="nucleotide sequence ID" value="NM_022710.1"/>
</dbReference>
<dbReference type="SMR" id="Q01066"/>
<dbReference type="BioGRID" id="248311">
    <property type="interactions" value="1"/>
</dbReference>
<dbReference type="FunCoup" id="Q01066">
    <property type="interactions" value="2391"/>
</dbReference>
<dbReference type="STRING" id="10116.ENSRNOP00000052147"/>
<dbReference type="BindingDB" id="Q01066"/>
<dbReference type="ChEMBL" id="CHEMBL2111322"/>
<dbReference type="DrugCentral" id="Q01066"/>
<dbReference type="GlyGen" id="Q01066">
    <property type="glycosylation" value="1 site"/>
</dbReference>
<dbReference type="iPTMnet" id="Q01066"/>
<dbReference type="PhosphoSitePlus" id="Q01066"/>
<dbReference type="PaxDb" id="10116-ENSRNOP00000052147"/>
<dbReference type="Ensembl" id="ENSRNOT00000055272.4">
    <property type="protein sequence ID" value="ENSRNOP00000052147.1"/>
    <property type="gene ID" value="ENSRNOG00000036828.4"/>
</dbReference>
<dbReference type="GeneID" id="29691"/>
<dbReference type="KEGG" id="rno:29691"/>
<dbReference type="UCSC" id="RGD:3278">
    <property type="organism name" value="rat"/>
</dbReference>
<dbReference type="AGR" id="RGD:3278"/>
<dbReference type="CTD" id="5153"/>
<dbReference type="RGD" id="3278">
    <property type="gene designation" value="Pde1b"/>
</dbReference>
<dbReference type="eggNOG" id="KOG3688">
    <property type="taxonomic scope" value="Eukaryota"/>
</dbReference>
<dbReference type="GeneTree" id="ENSGT00940000160712"/>
<dbReference type="HOGENOM" id="CLU_005940_1_3_1"/>
<dbReference type="InParanoid" id="Q01066"/>
<dbReference type="OMA" id="KPWIPCL"/>
<dbReference type="OrthoDB" id="189220at2759"/>
<dbReference type="PhylomeDB" id="Q01066"/>
<dbReference type="TreeFam" id="TF314638"/>
<dbReference type="Reactome" id="R-RNO-111957">
    <property type="pathway name" value="Cam-PDE 1 activation"/>
</dbReference>
<dbReference type="Reactome" id="R-RNO-418457">
    <property type="pathway name" value="cGMP effects"/>
</dbReference>
<dbReference type="Reactome" id="R-RNO-418555">
    <property type="pathway name" value="G alpha (s) signalling events"/>
</dbReference>
<dbReference type="PRO" id="PR:Q01066"/>
<dbReference type="Proteomes" id="UP000002494">
    <property type="component" value="Chromosome 7"/>
</dbReference>
<dbReference type="Bgee" id="ENSRNOG00000036828">
    <property type="expression patterns" value="Expressed in frontal cortex and 18 other cell types or tissues"/>
</dbReference>
<dbReference type="GO" id="GO:0005829">
    <property type="term" value="C:cytosol"/>
    <property type="evidence" value="ECO:0000250"/>
    <property type="project" value="UniProtKB"/>
</dbReference>
<dbReference type="GO" id="GO:0043025">
    <property type="term" value="C:neuronal cell body"/>
    <property type="evidence" value="ECO:0000314"/>
    <property type="project" value="RGD"/>
</dbReference>
<dbReference type="GO" id="GO:0004115">
    <property type="term" value="F:3',5'-cyclic-AMP phosphodiesterase activity"/>
    <property type="evidence" value="ECO:0000314"/>
    <property type="project" value="UniProtKB"/>
</dbReference>
<dbReference type="GO" id="GO:0047555">
    <property type="term" value="F:3',5'-cyclic-GMP phosphodiesterase activity"/>
    <property type="evidence" value="ECO:0000266"/>
    <property type="project" value="RGD"/>
</dbReference>
<dbReference type="GO" id="GO:0005516">
    <property type="term" value="F:calmodulin binding"/>
    <property type="evidence" value="ECO:0007669"/>
    <property type="project" value="UniProtKB-KW"/>
</dbReference>
<dbReference type="GO" id="GO:0048101">
    <property type="term" value="F:calmodulin-activated 3',5'-cyclic-GMP phosphodiesterase activity"/>
    <property type="evidence" value="ECO:0000318"/>
    <property type="project" value="GO_Central"/>
</dbReference>
<dbReference type="GO" id="GO:0004117">
    <property type="term" value="F:calmodulin-activated dual specificity 3',5'-cyclic-GMP, 3',5'-cyclic-AMP phosphodiesterase activity"/>
    <property type="evidence" value="ECO:0000250"/>
    <property type="project" value="UniProtKB"/>
</dbReference>
<dbReference type="GO" id="GO:0004112">
    <property type="term" value="F:cyclic-nucleotide phosphodiesterase activity"/>
    <property type="evidence" value="ECO:0000314"/>
    <property type="project" value="RGD"/>
</dbReference>
<dbReference type="GO" id="GO:0046872">
    <property type="term" value="F:metal ion binding"/>
    <property type="evidence" value="ECO:0007669"/>
    <property type="project" value="UniProtKB-KW"/>
</dbReference>
<dbReference type="GO" id="GO:0019933">
    <property type="term" value="P:cAMP-mediated signaling"/>
    <property type="evidence" value="ECO:0000318"/>
    <property type="project" value="GO_Central"/>
</dbReference>
<dbReference type="GO" id="GO:0097011">
    <property type="term" value="P:cellular response to granulocyte macrophage colony-stimulating factor stimulus"/>
    <property type="evidence" value="ECO:0000266"/>
    <property type="project" value="RGD"/>
</dbReference>
<dbReference type="GO" id="GO:0036006">
    <property type="term" value="P:cellular response to macrophage colony-stimulating factor stimulus"/>
    <property type="evidence" value="ECO:0000266"/>
    <property type="project" value="RGD"/>
</dbReference>
<dbReference type="GO" id="GO:0042420">
    <property type="term" value="P:dopamine catabolic process"/>
    <property type="evidence" value="ECO:0000266"/>
    <property type="project" value="RGD"/>
</dbReference>
<dbReference type="GO" id="GO:0007626">
    <property type="term" value="P:locomotory behavior"/>
    <property type="evidence" value="ECO:0000266"/>
    <property type="project" value="RGD"/>
</dbReference>
<dbReference type="GO" id="GO:0030224">
    <property type="term" value="P:monocyte differentiation"/>
    <property type="evidence" value="ECO:0000266"/>
    <property type="project" value="RGD"/>
</dbReference>
<dbReference type="GO" id="GO:0001975">
    <property type="term" value="P:response to amphetamine"/>
    <property type="evidence" value="ECO:0000266"/>
    <property type="project" value="RGD"/>
</dbReference>
<dbReference type="GO" id="GO:0042428">
    <property type="term" value="P:serotonin metabolic process"/>
    <property type="evidence" value="ECO:0000266"/>
    <property type="project" value="RGD"/>
</dbReference>
<dbReference type="GO" id="GO:0007165">
    <property type="term" value="P:signal transduction"/>
    <property type="evidence" value="ECO:0000266"/>
    <property type="project" value="RGD"/>
</dbReference>
<dbReference type="GO" id="GO:0008542">
    <property type="term" value="P:visual learning"/>
    <property type="evidence" value="ECO:0000266"/>
    <property type="project" value="RGD"/>
</dbReference>
<dbReference type="CDD" id="cd00077">
    <property type="entry name" value="HDc"/>
    <property type="match status" value="1"/>
</dbReference>
<dbReference type="FunFam" id="1.10.1300.10:FF:000012">
    <property type="entry name" value="Phosphodiesterase"/>
    <property type="match status" value="1"/>
</dbReference>
<dbReference type="Gene3D" id="1.10.1300.10">
    <property type="entry name" value="3'5'-cyclic nucleotide phosphodiesterase, catalytic domain"/>
    <property type="match status" value="1"/>
</dbReference>
<dbReference type="InterPro" id="IPR003607">
    <property type="entry name" value="HD/PDEase_dom"/>
</dbReference>
<dbReference type="InterPro" id="IPR023088">
    <property type="entry name" value="PDEase"/>
</dbReference>
<dbReference type="InterPro" id="IPR002073">
    <property type="entry name" value="PDEase_catalytic_dom"/>
</dbReference>
<dbReference type="InterPro" id="IPR036971">
    <property type="entry name" value="PDEase_catalytic_dom_sf"/>
</dbReference>
<dbReference type="InterPro" id="IPR023174">
    <property type="entry name" value="PDEase_CS"/>
</dbReference>
<dbReference type="InterPro" id="IPR013706">
    <property type="entry name" value="PDEase_N"/>
</dbReference>
<dbReference type="PANTHER" id="PTHR11347">
    <property type="entry name" value="CYCLIC NUCLEOTIDE PHOSPHODIESTERASE"/>
    <property type="match status" value="1"/>
</dbReference>
<dbReference type="Pfam" id="PF00233">
    <property type="entry name" value="PDEase_I"/>
    <property type="match status" value="1"/>
</dbReference>
<dbReference type="Pfam" id="PF08499">
    <property type="entry name" value="PDEase_I_N"/>
    <property type="match status" value="1"/>
</dbReference>
<dbReference type="PRINTS" id="PR00387">
    <property type="entry name" value="PDIESTERASE1"/>
</dbReference>
<dbReference type="SMART" id="SM00471">
    <property type="entry name" value="HDc"/>
    <property type="match status" value="1"/>
</dbReference>
<dbReference type="SUPFAM" id="SSF109604">
    <property type="entry name" value="HD-domain/PDEase-like"/>
    <property type="match status" value="1"/>
</dbReference>
<dbReference type="PROSITE" id="PS00126">
    <property type="entry name" value="PDEASE_I_1"/>
    <property type="match status" value="1"/>
</dbReference>
<dbReference type="PROSITE" id="PS51845">
    <property type="entry name" value="PDEASE_I_2"/>
    <property type="match status" value="1"/>
</dbReference>
<keyword id="KW-0112">Calmodulin-binding</keyword>
<keyword id="KW-0114">cAMP</keyword>
<keyword id="KW-0140">cGMP</keyword>
<keyword id="KW-0963">Cytoplasm</keyword>
<keyword id="KW-0378">Hydrolase</keyword>
<keyword id="KW-0460">Magnesium</keyword>
<keyword id="KW-0479">Metal-binding</keyword>
<keyword id="KW-0597">Phosphoprotein</keyword>
<keyword id="KW-1185">Reference proteome</keyword>
<keyword id="KW-0862">Zinc</keyword>
<evidence type="ECO:0000250" key="1">
    <source>
        <dbReference type="UniProtKB" id="O76083"/>
    </source>
</evidence>
<evidence type="ECO:0000250" key="2">
    <source>
        <dbReference type="UniProtKB" id="P14100"/>
    </source>
</evidence>
<evidence type="ECO:0000250" key="3">
    <source>
        <dbReference type="UniProtKB" id="Q01064"/>
    </source>
</evidence>
<evidence type="ECO:0000250" key="4">
    <source>
        <dbReference type="UniProtKB" id="Q01065"/>
    </source>
</evidence>
<evidence type="ECO:0000255" key="5">
    <source>
        <dbReference type="PROSITE-ProRule" id="PRU01192"/>
    </source>
</evidence>
<evidence type="ECO:0000256" key="6">
    <source>
        <dbReference type="SAM" id="MobiDB-lite"/>
    </source>
</evidence>
<evidence type="ECO:0000269" key="7">
    <source>
    </source>
</evidence>
<evidence type="ECO:0000303" key="8">
    <source>
    </source>
</evidence>
<evidence type="ECO:0000305" key="9"/>
<evidence type="ECO:0000305" key="10">
    <source>
    </source>
</evidence>
<evidence type="ECO:0000312" key="11">
    <source>
        <dbReference type="RGD" id="3278"/>
    </source>
</evidence>
<evidence type="ECO:0007744" key="12">
    <source>
    </source>
</evidence>
<feature type="chain" id="PRO_0000198791" description="Dual specificity calcium/calmodulin-dependent 3',5'-cyclic nucleotide phosphodiesterase 1B">
    <location>
        <begin position="1"/>
        <end position="535"/>
    </location>
</feature>
<feature type="domain" description="PDEase" evidence="5">
    <location>
        <begin position="145"/>
        <end position="502"/>
    </location>
</feature>
<feature type="region of interest" description="Disordered" evidence="6">
    <location>
        <begin position="1"/>
        <end position="21"/>
    </location>
</feature>
<feature type="region of interest" description="Calmodulin-binding" evidence="2">
    <location>
        <begin position="27"/>
        <end position="47"/>
    </location>
</feature>
<feature type="region of interest" description="Calmodulin-binding" evidence="2">
    <location>
        <begin position="117"/>
        <end position="140"/>
    </location>
</feature>
<feature type="region of interest" description="Disordered" evidence="6">
    <location>
        <begin position="445"/>
        <end position="474"/>
    </location>
</feature>
<feature type="region of interest" description="Disordered" evidence="6">
    <location>
        <begin position="495"/>
        <end position="535"/>
    </location>
</feature>
<feature type="compositionally biased region" description="Polar residues" evidence="6">
    <location>
        <begin position="454"/>
        <end position="463"/>
    </location>
</feature>
<feature type="active site" description="Proton donor" evidence="1">
    <location>
        <position position="222"/>
    </location>
</feature>
<feature type="binding site" evidence="3">
    <location>
        <position position="226"/>
    </location>
    <ligand>
        <name>Zn(2+)</name>
        <dbReference type="ChEBI" id="CHEBI:29105"/>
    </ligand>
</feature>
<feature type="binding site" evidence="3">
    <location>
        <position position="262"/>
    </location>
    <ligand>
        <name>Zn(2+)</name>
        <dbReference type="ChEBI" id="CHEBI:29105"/>
    </ligand>
</feature>
<feature type="binding site" evidence="3">
    <location>
        <position position="263"/>
    </location>
    <ligand>
        <name>Mg(2+)</name>
        <dbReference type="ChEBI" id="CHEBI:18420"/>
    </ligand>
</feature>
<feature type="binding site" evidence="3">
    <location>
        <position position="263"/>
    </location>
    <ligand>
        <name>Zn(2+)</name>
        <dbReference type="ChEBI" id="CHEBI:29105"/>
    </ligand>
</feature>
<feature type="binding site" evidence="3">
    <location>
        <position position="369"/>
    </location>
    <ligand>
        <name>Zn(2+)</name>
        <dbReference type="ChEBI" id="CHEBI:29105"/>
    </ligand>
</feature>
<feature type="modified residue" description="Phosphoserine" evidence="4">
    <location>
        <position position="7"/>
    </location>
</feature>
<feature type="modified residue" description="Phosphoserine" evidence="4">
    <location>
        <position position="14"/>
    </location>
</feature>
<feature type="modified residue" description="Phosphoserine" evidence="12">
    <location>
        <position position="465"/>
    </location>
</feature>
<feature type="modified residue" description="Phosphoserine" evidence="4">
    <location>
        <position position="513"/>
    </location>
</feature>
<gene>
    <name evidence="11" type="primary">Pde1b</name>
    <name type="synonym">Pde1b1</name>
</gene>
<comment type="function">
    <text evidence="7">Cyclic nucleotide phosphodiesterase with a dual specificity for the second messengers cAMP and cGMP, which are key regulators of many important physiological processes. Has a preference for cGMP as a substrate.</text>
</comment>
<comment type="catalytic activity">
    <reaction evidence="7">
        <text>a nucleoside 3',5'-cyclic phosphate + H2O = a nucleoside 5'-phosphate + H(+)</text>
        <dbReference type="Rhea" id="RHEA:14653"/>
        <dbReference type="ChEBI" id="CHEBI:15377"/>
        <dbReference type="ChEBI" id="CHEBI:15378"/>
        <dbReference type="ChEBI" id="CHEBI:57867"/>
        <dbReference type="ChEBI" id="CHEBI:58464"/>
        <dbReference type="EC" id="3.1.4.17"/>
    </reaction>
    <physiologicalReaction direction="left-to-right" evidence="10">
        <dbReference type="Rhea" id="RHEA:14654"/>
    </physiologicalReaction>
</comment>
<comment type="catalytic activity">
    <reaction evidence="7">
        <text>3',5'-cyclic GMP + H2O = GMP + H(+)</text>
        <dbReference type="Rhea" id="RHEA:16957"/>
        <dbReference type="ChEBI" id="CHEBI:15377"/>
        <dbReference type="ChEBI" id="CHEBI:15378"/>
        <dbReference type="ChEBI" id="CHEBI:57746"/>
        <dbReference type="ChEBI" id="CHEBI:58115"/>
    </reaction>
    <physiologicalReaction direction="left-to-right" evidence="10">
        <dbReference type="Rhea" id="RHEA:16958"/>
    </physiologicalReaction>
</comment>
<comment type="catalytic activity">
    <reaction evidence="3">
        <text>3',5'-cyclic AMP + H2O = AMP + H(+)</text>
        <dbReference type="Rhea" id="RHEA:25277"/>
        <dbReference type="ChEBI" id="CHEBI:15377"/>
        <dbReference type="ChEBI" id="CHEBI:15378"/>
        <dbReference type="ChEBI" id="CHEBI:58165"/>
        <dbReference type="ChEBI" id="CHEBI:456215"/>
    </reaction>
    <physiologicalReaction direction="left-to-right" evidence="3">
        <dbReference type="Rhea" id="RHEA:25278"/>
    </physiologicalReaction>
</comment>
<comment type="cofactor">
    <cofactor evidence="3">
        <name>Zn(2+)</name>
        <dbReference type="ChEBI" id="CHEBI:29105"/>
    </cofactor>
    <text evidence="3">Binds 2 divalent metal cations per subunit. Site 1 may preferentially bind zinc ions.</text>
</comment>
<comment type="cofactor">
    <cofactor evidence="3">
        <name>Mg(2+)</name>
        <dbReference type="ChEBI" id="CHEBI:18420"/>
    </cofactor>
    <text evidence="3">Binds 2 divalent metal cations per subunit. Site 2 has a preference for magnesium ions.</text>
</comment>
<comment type="activity regulation">
    <text evidence="7">Type I PDE are activated by the binding of calmodulin in the presence of Ca(2+).</text>
</comment>
<comment type="subunit">
    <text evidence="2">Homodimer.</text>
</comment>
<comment type="subcellular location">
    <subcellularLocation>
        <location evidence="3">Cytoplasm</location>
        <location evidence="3">Cytosol</location>
    </subcellularLocation>
</comment>
<comment type="tissue specificity">
    <text evidence="7">Expressed in brain.</text>
</comment>
<comment type="similarity">
    <text evidence="9">Belongs to the cyclic nucleotide phosphodiesterase family. PDE1 subfamily.</text>
</comment>
<accession>Q01066</accession>
<accession>Q548L3</accession>
<proteinExistence type="evidence at protein level"/>